<accession>B5R7T3</accession>
<keyword id="KW-0997">Cell inner membrane</keyword>
<keyword id="KW-1003">Cell membrane</keyword>
<keyword id="KW-0460">Magnesium</keyword>
<keyword id="KW-0472">Membrane</keyword>
<keyword id="KW-0808">Transferase</keyword>
<keyword id="KW-0812">Transmembrane</keyword>
<keyword id="KW-1133">Transmembrane helix</keyword>
<keyword id="KW-0831">Ubiquinone biosynthesis</keyword>
<dbReference type="EC" id="2.5.1.39" evidence="1"/>
<dbReference type="EMBL" id="AM933173">
    <property type="protein sequence ID" value="CAR39846.1"/>
    <property type="molecule type" value="Genomic_DNA"/>
</dbReference>
<dbReference type="RefSeq" id="WP_000455249.1">
    <property type="nucleotide sequence ID" value="NC_011274.1"/>
</dbReference>
<dbReference type="SMR" id="B5R7T3"/>
<dbReference type="KEGG" id="seg:SG4077"/>
<dbReference type="HOGENOM" id="CLU_034879_1_0_6"/>
<dbReference type="UniPathway" id="UPA00232"/>
<dbReference type="Proteomes" id="UP000008321">
    <property type="component" value="Chromosome"/>
</dbReference>
<dbReference type="GO" id="GO:0005886">
    <property type="term" value="C:plasma membrane"/>
    <property type="evidence" value="ECO:0007669"/>
    <property type="project" value="UniProtKB-SubCell"/>
</dbReference>
<dbReference type="GO" id="GO:0008412">
    <property type="term" value="F:4-hydroxybenzoate polyprenyltransferase activity"/>
    <property type="evidence" value="ECO:0007669"/>
    <property type="project" value="UniProtKB-UniRule"/>
</dbReference>
<dbReference type="GO" id="GO:0006744">
    <property type="term" value="P:ubiquinone biosynthetic process"/>
    <property type="evidence" value="ECO:0007669"/>
    <property type="project" value="UniProtKB-UniRule"/>
</dbReference>
<dbReference type="CDD" id="cd13959">
    <property type="entry name" value="PT_UbiA_COQ2"/>
    <property type="match status" value="1"/>
</dbReference>
<dbReference type="FunFam" id="1.10.357.140:FF:000002">
    <property type="entry name" value="4-hydroxybenzoate octaprenyltransferase"/>
    <property type="match status" value="1"/>
</dbReference>
<dbReference type="FunFam" id="1.20.120.1780:FF:000001">
    <property type="entry name" value="4-hydroxybenzoate octaprenyltransferase"/>
    <property type="match status" value="1"/>
</dbReference>
<dbReference type="Gene3D" id="1.10.357.140">
    <property type="entry name" value="UbiA prenyltransferase"/>
    <property type="match status" value="1"/>
</dbReference>
<dbReference type="Gene3D" id="1.20.120.1780">
    <property type="entry name" value="UbiA prenyltransferase"/>
    <property type="match status" value="1"/>
</dbReference>
<dbReference type="HAMAP" id="MF_01635">
    <property type="entry name" value="UbiA"/>
    <property type="match status" value="1"/>
</dbReference>
<dbReference type="InterPro" id="IPR006370">
    <property type="entry name" value="HB_polyprenyltransferase-like"/>
</dbReference>
<dbReference type="InterPro" id="IPR039653">
    <property type="entry name" value="Prenyltransferase"/>
</dbReference>
<dbReference type="InterPro" id="IPR000537">
    <property type="entry name" value="UbiA_prenyltransferase"/>
</dbReference>
<dbReference type="InterPro" id="IPR030470">
    <property type="entry name" value="UbiA_prenylTrfase_CS"/>
</dbReference>
<dbReference type="InterPro" id="IPR044878">
    <property type="entry name" value="UbiA_sf"/>
</dbReference>
<dbReference type="NCBIfam" id="TIGR01474">
    <property type="entry name" value="ubiA_proteo"/>
    <property type="match status" value="1"/>
</dbReference>
<dbReference type="PANTHER" id="PTHR11048:SF28">
    <property type="entry name" value="4-HYDROXYBENZOATE POLYPRENYLTRANSFERASE, MITOCHONDRIAL"/>
    <property type="match status" value="1"/>
</dbReference>
<dbReference type="PANTHER" id="PTHR11048">
    <property type="entry name" value="PRENYLTRANSFERASES"/>
    <property type="match status" value="1"/>
</dbReference>
<dbReference type="Pfam" id="PF01040">
    <property type="entry name" value="UbiA"/>
    <property type="match status" value="1"/>
</dbReference>
<dbReference type="PROSITE" id="PS00943">
    <property type="entry name" value="UBIA"/>
    <property type="match status" value="1"/>
</dbReference>
<reference key="1">
    <citation type="journal article" date="2008" name="Genome Res.">
        <title>Comparative genome analysis of Salmonella enteritidis PT4 and Salmonella gallinarum 287/91 provides insights into evolutionary and host adaptation pathways.</title>
        <authorList>
            <person name="Thomson N.R."/>
            <person name="Clayton D.J."/>
            <person name="Windhorst D."/>
            <person name="Vernikos G."/>
            <person name="Davidson S."/>
            <person name="Churcher C."/>
            <person name="Quail M.A."/>
            <person name="Stevens M."/>
            <person name="Jones M.A."/>
            <person name="Watson M."/>
            <person name="Barron A."/>
            <person name="Layton A."/>
            <person name="Pickard D."/>
            <person name="Kingsley R.A."/>
            <person name="Bignell A."/>
            <person name="Clark L."/>
            <person name="Harris B."/>
            <person name="Ormond D."/>
            <person name="Abdellah Z."/>
            <person name="Brooks K."/>
            <person name="Cherevach I."/>
            <person name="Chillingworth T."/>
            <person name="Woodward J."/>
            <person name="Norberczak H."/>
            <person name="Lord A."/>
            <person name="Arrowsmith C."/>
            <person name="Jagels K."/>
            <person name="Moule S."/>
            <person name="Mungall K."/>
            <person name="Saunders M."/>
            <person name="Whitehead S."/>
            <person name="Chabalgoity J.A."/>
            <person name="Maskell D."/>
            <person name="Humphreys T."/>
            <person name="Roberts M."/>
            <person name="Barrow P.A."/>
            <person name="Dougan G."/>
            <person name="Parkhill J."/>
        </authorList>
    </citation>
    <scope>NUCLEOTIDE SEQUENCE [LARGE SCALE GENOMIC DNA]</scope>
    <source>
        <strain>287/91 / NCTC 13346</strain>
    </source>
</reference>
<gene>
    <name evidence="1" type="primary">ubiA</name>
    <name type="ordered locus">SG4077</name>
</gene>
<evidence type="ECO:0000255" key="1">
    <source>
        <dbReference type="HAMAP-Rule" id="MF_01635"/>
    </source>
</evidence>
<sequence>MEWSLTQSKLLAFHRLMRTDKPIGALLLLWPTLWALWVATPGMPQLWILAVFVAGVWLMRAAGCVVNDYADRKFDGHVKRTVNRPLPSGAVTEKEARNLFVVLVLLAFLLVLTLNAMTILLSVAALALAWVYPFMKRYTHLPQVVLGAAFGWSIPMAFAAVSESLPLSCWLMFLANILWAVAYDTQYAMVDRDDDIKIGIKSTAILFGRYDTLIIGILQLGVMALMALIGWLNGLGWGYYWAVLVAGALFVYQQKLIANREREACFKAFMNNNYVGLVLFLGLAMSYWHF</sequence>
<proteinExistence type="inferred from homology"/>
<name>UBIA_SALG2</name>
<feature type="chain" id="PRO_1000186684" description="4-hydroxybenzoate octaprenyltransferase">
    <location>
        <begin position="1"/>
        <end position="290"/>
    </location>
</feature>
<feature type="transmembrane region" description="Helical" evidence="1">
    <location>
        <begin position="23"/>
        <end position="43"/>
    </location>
</feature>
<feature type="transmembrane region" description="Helical" evidence="1">
    <location>
        <begin position="46"/>
        <end position="66"/>
    </location>
</feature>
<feature type="transmembrane region" description="Helical" evidence="1">
    <location>
        <begin position="99"/>
        <end position="119"/>
    </location>
</feature>
<feature type="transmembrane region" description="Helical" evidence="1">
    <location>
        <begin position="141"/>
        <end position="161"/>
    </location>
</feature>
<feature type="transmembrane region" description="Helical" evidence="1">
    <location>
        <begin position="163"/>
        <end position="183"/>
    </location>
</feature>
<feature type="transmembrane region" description="Helical" evidence="1">
    <location>
        <begin position="212"/>
        <end position="232"/>
    </location>
</feature>
<feature type="transmembrane region" description="Helical" evidence="1">
    <location>
        <begin position="233"/>
        <end position="253"/>
    </location>
</feature>
<feature type="transmembrane region" description="Helical" evidence="1">
    <location>
        <begin position="268"/>
        <end position="288"/>
    </location>
</feature>
<organism>
    <name type="scientific">Salmonella gallinarum (strain 287/91 / NCTC 13346)</name>
    <dbReference type="NCBI Taxonomy" id="550538"/>
    <lineage>
        <taxon>Bacteria</taxon>
        <taxon>Pseudomonadati</taxon>
        <taxon>Pseudomonadota</taxon>
        <taxon>Gammaproteobacteria</taxon>
        <taxon>Enterobacterales</taxon>
        <taxon>Enterobacteriaceae</taxon>
        <taxon>Salmonella</taxon>
    </lineage>
</organism>
<comment type="function">
    <text evidence="1">Catalyzes the prenylation of para-hydroxybenzoate (PHB) with an all-trans polyprenyl group. Mediates the second step in the final reaction sequence of ubiquinone-8 (UQ-8) biosynthesis, which is the condensation of the polyisoprenoid side chain with PHB, generating the first membrane-bound Q intermediate 3-octaprenyl-4-hydroxybenzoate.</text>
</comment>
<comment type="catalytic activity">
    <reaction evidence="1">
        <text>all-trans-octaprenyl diphosphate + 4-hydroxybenzoate = 4-hydroxy-3-(all-trans-octaprenyl)benzoate + diphosphate</text>
        <dbReference type="Rhea" id="RHEA:27782"/>
        <dbReference type="ChEBI" id="CHEBI:1617"/>
        <dbReference type="ChEBI" id="CHEBI:17879"/>
        <dbReference type="ChEBI" id="CHEBI:33019"/>
        <dbReference type="ChEBI" id="CHEBI:57711"/>
        <dbReference type="EC" id="2.5.1.39"/>
    </reaction>
</comment>
<comment type="cofactor">
    <cofactor evidence="1">
        <name>Mg(2+)</name>
        <dbReference type="ChEBI" id="CHEBI:18420"/>
    </cofactor>
</comment>
<comment type="pathway">
    <text evidence="1">Cofactor biosynthesis; ubiquinone biosynthesis.</text>
</comment>
<comment type="subcellular location">
    <subcellularLocation>
        <location evidence="1">Cell inner membrane</location>
        <topology evidence="1">Multi-pass membrane protein</topology>
    </subcellularLocation>
</comment>
<comment type="similarity">
    <text evidence="1">Belongs to the UbiA prenyltransferase family.</text>
</comment>
<protein>
    <recommendedName>
        <fullName evidence="1">4-hydroxybenzoate octaprenyltransferase</fullName>
        <ecNumber evidence="1">2.5.1.39</ecNumber>
    </recommendedName>
    <alternativeName>
        <fullName evidence="1">4-HB polyprenyltransferase</fullName>
    </alternativeName>
</protein>